<protein>
    <recommendedName>
        <fullName evidence="1">DNA-directed RNA polymerase subunit omega</fullName>
        <shortName evidence="1">RNAP omega subunit</shortName>
        <ecNumber evidence="1">2.7.7.6</ecNumber>
    </recommendedName>
    <alternativeName>
        <fullName evidence="1">RNA polymerase omega subunit</fullName>
    </alternativeName>
    <alternativeName>
        <fullName evidence="1">Transcriptase subunit omega</fullName>
    </alternativeName>
</protein>
<accession>C0MH28</accession>
<gene>
    <name evidence="1" type="primary">rpoZ</name>
    <name type="ordered locus">SZO_04040</name>
</gene>
<feature type="chain" id="PRO_1000205530" description="DNA-directed RNA polymerase subunit omega">
    <location>
        <begin position="1"/>
        <end position="105"/>
    </location>
</feature>
<comment type="function">
    <text evidence="1">Promotes RNA polymerase assembly. Latches the N- and C-terminal regions of the beta' subunit thereby facilitating its interaction with the beta and alpha subunits.</text>
</comment>
<comment type="catalytic activity">
    <reaction evidence="1">
        <text>RNA(n) + a ribonucleoside 5'-triphosphate = RNA(n+1) + diphosphate</text>
        <dbReference type="Rhea" id="RHEA:21248"/>
        <dbReference type="Rhea" id="RHEA-COMP:14527"/>
        <dbReference type="Rhea" id="RHEA-COMP:17342"/>
        <dbReference type="ChEBI" id="CHEBI:33019"/>
        <dbReference type="ChEBI" id="CHEBI:61557"/>
        <dbReference type="ChEBI" id="CHEBI:140395"/>
        <dbReference type="EC" id="2.7.7.6"/>
    </reaction>
</comment>
<comment type="subunit">
    <text evidence="1">The RNAP catalytic core consists of 2 alpha, 1 beta, 1 beta' and 1 omega subunit. When a sigma factor is associated with the core the holoenzyme is formed, which can initiate transcription.</text>
</comment>
<comment type="similarity">
    <text evidence="1">Belongs to the RNA polymerase subunit omega family.</text>
</comment>
<name>RPOZ_STRS7</name>
<sequence length="105" mass="11761">MMLKPSIDTLLDKVPSKYSLVILQAKRAHELEAGATPTQAFKSVKSTLQALEEIESGNVVIHPDPAAKRAAVRARIEAERLAREEEERKIKEQIAKEKEEEGEKI</sequence>
<organism>
    <name type="scientific">Streptococcus equi subsp. zooepidemicus (strain H70)</name>
    <dbReference type="NCBI Taxonomy" id="553483"/>
    <lineage>
        <taxon>Bacteria</taxon>
        <taxon>Bacillati</taxon>
        <taxon>Bacillota</taxon>
        <taxon>Bacilli</taxon>
        <taxon>Lactobacillales</taxon>
        <taxon>Streptococcaceae</taxon>
        <taxon>Streptococcus</taxon>
    </lineage>
</organism>
<proteinExistence type="inferred from homology"/>
<evidence type="ECO:0000255" key="1">
    <source>
        <dbReference type="HAMAP-Rule" id="MF_00366"/>
    </source>
</evidence>
<reference key="1">
    <citation type="journal article" date="2009" name="PLoS Pathog.">
        <title>Genomic evidence for the evolution of Streptococcus equi: host restriction, increased virulence, and genetic exchange with human pathogens.</title>
        <authorList>
            <person name="Holden M.T.G."/>
            <person name="Heather Z."/>
            <person name="Paillot R."/>
            <person name="Steward K.F."/>
            <person name="Webb K."/>
            <person name="Ainslie F."/>
            <person name="Jourdan T."/>
            <person name="Bason N.C."/>
            <person name="Holroyd N.E."/>
            <person name="Mungall K."/>
            <person name="Quail M.A."/>
            <person name="Sanders M."/>
            <person name="Simmonds M."/>
            <person name="Willey D."/>
            <person name="Brooks K."/>
            <person name="Aanensen D.M."/>
            <person name="Spratt B.G."/>
            <person name="Jolley K.A."/>
            <person name="Maiden M.C.J."/>
            <person name="Kehoe M."/>
            <person name="Chanter N."/>
            <person name="Bentley S.D."/>
            <person name="Robinson C."/>
            <person name="Maskell D.J."/>
            <person name="Parkhill J."/>
            <person name="Waller A.S."/>
        </authorList>
    </citation>
    <scope>NUCLEOTIDE SEQUENCE [LARGE SCALE GENOMIC DNA]</scope>
    <source>
        <strain>H70</strain>
    </source>
</reference>
<keyword id="KW-0240">DNA-directed RNA polymerase</keyword>
<keyword id="KW-0548">Nucleotidyltransferase</keyword>
<keyword id="KW-0804">Transcription</keyword>
<keyword id="KW-0808">Transferase</keyword>
<dbReference type="EC" id="2.7.7.6" evidence="1"/>
<dbReference type="EMBL" id="FM204884">
    <property type="protein sequence ID" value="CAW98288.1"/>
    <property type="molecule type" value="Genomic_DNA"/>
</dbReference>
<dbReference type="SMR" id="C0MH28"/>
<dbReference type="KEGG" id="seq:SZO_04040"/>
<dbReference type="eggNOG" id="COG1758">
    <property type="taxonomic scope" value="Bacteria"/>
</dbReference>
<dbReference type="HOGENOM" id="CLU_125406_0_0_9"/>
<dbReference type="Proteomes" id="UP000001368">
    <property type="component" value="Chromosome"/>
</dbReference>
<dbReference type="GO" id="GO:0000428">
    <property type="term" value="C:DNA-directed RNA polymerase complex"/>
    <property type="evidence" value="ECO:0007669"/>
    <property type="project" value="UniProtKB-KW"/>
</dbReference>
<dbReference type="GO" id="GO:0003677">
    <property type="term" value="F:DNA binding"/>
    <property type="evidence" value="ECO:0007669"/>
    <property type="project" value="UniProtKB-UniRule"/>
</dbReference>
<dbReference type="GO" id="GO:0003899">
    <property type="term" value="F:DNA-directed RNA polymerase activity"/>
    <property type="evidence" value="ECO:0007669"/>
    <property type="project" value="UniProtKB-UniRule"/>
</dbReference>
<dbReference type="GO" id="GO:0006351">
    <property type="term" value="P:DNA-templated transcription"/>
    <property type="evidence" value="ECO:0007669"/>
    <property type="project" value="UniProtKB-UniRule"/>
</dbReference>
<dbReference type="Gene3D" id="3.90.940.10">
    <property type="match status" value="1"/>
</dbReference>
<dbReference type="HAMAP" id="MF_00366">
    <property type="entry name" value="RNApol_bact_RpoZ"/>
    <property type="match status" value="1"/>
</dbReference>
<dbReference type="InterPro" id="IPR003716">
    <property type="entry name" value="DNA-dir_RNA_pol_omega"/>
</dbReference>
<dbReference type="InterPro" id="IPR006110">
    <property type="entry name" value="Pol_omega/Rpo6/RPB6"/>
</dbReference>
<dbReference type="InterPro" id="IPR036161">
    <property type="entry name" value="RPB6/omega-like_sf"/>
</dbReference>
<dbReference type="NCBIfam" id="TIGR00690">
    <property type="entry name" value="rpoZ"/>
    <property type="match status" value="1"/>
</dbReference>
<dbReference type="PANTHER" id="PTHR34476">
    <property type="entry name" value="DNA-DIRECTED RNA POLYMERASE SUBUNIT OMEGA"/>
    <property type="match status" value="1"/>
</dbReference>
<dbReference type="PANTHER" id="PTHR34476:SF1">
    <property type="entry name" value="DNA-DIRECTED RNA POLYMERASE SUBUNIT OMEGA"/>
    <property type="match status" value="1"/>
</dbReference>
<dbReference type="Pfam" id="PF01192">
    <property type="entry name" value="RNA_pol_Rpb6"/>
    <property type="match status" value="1"/>
</dbReference>
<dbReference type="SMART" id="SM01409">
    <property type="entry name" value="RNA_pol_Rpb6"/>
    <property type="match status" value="1"/>
</dbReference>
<dbReference type="SUPFAM" id="SSF63562">
    <property type="entry name" value="RPB6/omega subunit-like"/>
    <property type="match status" value="1"/>
</dbReference>